<evidence type="ECO:0000250" key="1"/>
<evidence type="ECO:0000255" key="2"/>
<evidence type="ECO:0000255" key="3">
    <source>
        <dbReference type="PROSITE-ProRule" id="PRU00458"/>
    </source>
</evidence>
<evidence type="ECO:0000255" key="4">
    <source>
        <dbReference type="PROSITE-ProRule" id="PRU00460"/>
    </source>
</evidence>
<evidence type="ECO:0000269" key="5">
    <source>
    </source>
</evidence>
<evidence type="ECO:0000269" key="6">
    <source>
    </source>
</evidence>
<evidence type="ECO:0000269" key="7">
    <source>
    </source>
</evidence>
<evidence type="ECO:0000269" key="8">
    <source>
    </source>
</evidence>
<evidence type="ECO:0000303" key="9">
    <source>
    </source>
</evidence>
<evidence type="ECO:0000305" key="10"/>
<dbReference type="EMBL" id="Z15008">
    <property type="protein sequence ID" value="CAA78728.1"/>
    <property type="molecule type" value="mRNA"/>
</dbReference>
<dbReference type="EMBL" id="Z15009">
    <property type="protein sequence ID" value="CAA78729.1"/>
    <property type="molecule type" value="mRNA"/>
</dbReference>
<dbReference type="EMBL" id="X73902">
    <property type="protein sequence ID" value="CAA52108.1"/>
    <property type="molecule type" value="mRNA"/>
</dbReference>
<dbReference type="EMBL" id="U31201">
    <property type="protein sequence ID" value="AAC50457.1"/>
    <property type="molecule type" value="Genomic_DNA"/>
</dbReference>
<dbReference type="EMBL" id="U31178">
    <property type="protein sequence ID" value="AAC50457.1"/>
    <property type="status" value="JOINED"/>
    <property type="molecule type" value="Genomic_DNA"/>
</dbReference>
<dbReference type="EMBL" id="U31179">
    <property type="protein sequence ID" value="AAC50457.1"/>
    <property type="status" value="JOINED"/>
    <property type="molecule type" value="Genomic_DNA"/>
</dbReference>
<dbReference type="EMBL" id="U31180">
    <property type="protein sequence ID" value="AAC50457.1"/>
    <property type="status" value="JOINED"/>
    <property type="molecule type" value="Genomic_DNA"/>
</dbReference>
<dbReference type="EMBL" id="U31181">
    <property type="protein sequence ID" value="AAC50457.1"/>
    <property type="status" value="JOINED"/>
    <property type="molecule type" value="Genomic_DNA"/>
</dbReference>
<dbReference type="EMBL" id="U31182">
    <property type="protein sequence ID" value="AAC50457.1"/>
    <property type="status" value="JOINED"/>
    <property type="molecule type" value="Genomic_DNA"/>
</dbReference>
<dbReference type="EMBL" id="U31183">
    <property type="protein sequence ID" value="AAC50457.1"/>
    <property type="status" value="JOINED"/>
    <property type="molecule type" value="Genomic_DNA"/>
</dbReference>
<dbReference type="EMBL" id="U31184">
    <property type="protein sequence ID" value="AAC50457.1"/>
    <property type="status" value="JOINED"/>
    <property type="molecule type" value="Genomic_DNA"/>
</dbReference>
<dbReference type="EMBL" id="U31186">
    <property type="protein sequence ID" value="AAC50457.1"/>
    <property type="status" value="JOINED"/>
    <property type="molecule type" value="Genomic_DNA"/>
</dbReference>
<dbReference type="EMBL" id="U31187">
    <property type="protein sequence ID" value="AAC50457.1"/>
    <property type="status" value="JOINED"/>
    <property type="molecule type" value="Genomic_DNA"/>
</dbReference>
<dbReference type="EMBL" id="U31188">
    <property type="protein sequence ID" value="AAC50457.1"/>
    <property type="status" value="JOINED"/>
    <property type="molecule type" value="Genomic_DNA"/>
</dbReference>
<dbReference type="EMBL" id="U31189">
    <property type="protein sequence ID" value="AAC50457.1"/>
    <property type="status" value="JOINED"/>
    <property type="molecule type" value="Genomic_DNA"/>
</dbReference>
<dbReference type="EMBL" id="U31190">
    <property type="protein sequence ID" value="AAC50457.1"/>
    <property type="status" value="JOINED"/>
    <property type="molecule type" value="Genomic_DNA"/>
</dbReference>
<dbReference type="EMBL" id="U31191">
    <property type="protein sequence ID" value="AAC50457.1"/>
    <property type="status" value="JOINED"/>
    <property type="molecule type" value="Genomic_DNA"/>
</dbReference>
<dbReference type="EMBL" id="U31192">
    <property type="protein sequence ID" value="AAC50457.1"/>
    <property type="status" value="JOINED"/>
    <property type="molecule type" value="Genomic_DNA"/>
</dbReference>
<dbReference type="EMBL" id="U31193">
    <property type="protein sequence ID" value="AAC50457.1"/>
    <property type="status" value="JOINED"/>
    <property type="molecule type" value="Genomic_DNA"/>
</dbReference>
<dbReference type="EMBL" id="U31194">
    <property type="protein sequence ID" value="AAC50457.1"/>
    <property type="status" value="JOINED"/>
    <property type="molecule type" value="Genomic_DNA"/>
</dbReference>
<dbReference type="EMBL" id="U31195">
    <property type="protein sequence ID" value="AAC50457.1"/>
    <property type="status" value="JOINED"/>
    <property type="molecule type" value="Genomic_DNA"/>
</dbReference>
<dbReference type="EMBL" id="U31196">
    <property type="protein sequence ID" value="AAC50457.1"/>
    <property type="status" value="JOINED"/>
    <property type="molecule type" value="Genomic_DNA"/>
</dbReference>
<dbReference type="EMBL" id="U31197">
    <property type="protein sequence ID" value="AAC50457.1"/>
    <property type="status" value="JOINED"/>
    <property type="molecule type" value="Genomic_DNA"/>
</dbReference>
<dbReference type="EMBL" id="U31198">
    <property type="protein sequence ID" value="AAC50457.1"/>
    <property type="status" value="JOINED"/>
    <property type="molecule type" value="Genomic_DNA"/>
</dbReference>
<dbReference type="EMBL" id="U31199">
    <property type="protein sequence ID" value="AAC50457.1"/>
    <property type="status" value="JOINED"/>
    <property type="molecule type" value="Genomic_DNA"/>
</dbReference>
<dbReference type="EMBL" id="U31200">
    <property type="protein sequence ID" value="AAC50456.1"/>
    <property type="molecule type" value="Genomic_DNA"/>
</dbReference>
<dbReference type="EMBL" id="U31178">
    <property type="protein sequence ID" value="AAC50456.1"/>
    <property type="status" value="JOINED"/>
    <property type="molecule type" value="Genomic_DNA"/>
</dbReference>
<dbReference type="EMBL" id="U31179">
    <property type="protein sequence ID" value="AAC50456.1"/>
    <property type="status" value="JOINED"/>
    <property type="molecule type" value="Genomic_DNA"/>
</dbReference>
<dbReference type="EMBL" id="U31180">
    <property type="protein sequence ID" value="AAC50456.1"/>
    <property type="status" value="JOINED"/>
    <property type="molecule type" value="Genomic_DNA"/>
</dbReference>
<dbReference type="EMBL" id="U31181">
    <property type="protein sequence ID" value="AAC50456.1"/>
    <property type="status" value="JOINED"/>
    <property type="molecule type" value="Genomic_DNA"/>
</dbReference>
<dbReference type="EMBL" id="U31182">
    <property type="protein sequence ID" value="AAC50456.1"/>
    <property type="status" value="JOINED"/>
    <property type="molecule type" value="Genomic_DNA"/>
</dbReference>
<dbReference type="EMBL" id="U31183">
    <property type="protein sequence ID" value="AAC50456.1"/>
    <property type="status" value="JOINED"/>
    <property type="molecule type" value="Genomic_DNA"/>
</dbReference>
<dbReference type="EMBL" id="U31184">
    <property type="protein sequence ID" value="AAC50456.1"/>
    <property type="status" value="JOINED"/>
    <property type="molecule type" value="Genomic_DNA"/>
</dbReference>
<dbReference type="EMBL" id="U31186">
    <property type="protein sequence ID" value="AAC50456.1"/>
    <property type="status" value="JOINED"/>
    <property type="molecule type" value="Genomic_DNA"/>
</dbReference>
<dbReference type="EMBL" id="U31187">
    <property type="protein sequence ID" value="AAC50456.1"/>
    <property type="status" value="JOINED"/>
    <property type="molecule type" value="Genomic_DNA"/>
</dbReference>
<dbReference type="EMBL" id="U31188">
    <property type="protein sequence ID" value="AAC50456.1"/>
    <property type="status" value="JOINED"/>
    <property type="molecule type" value="Genomic_DNA"/>
</dbReference>
<dbReference type="EMBL" id="U31189">
    <property type="protein sequence ID" value="AAC50456.1"/>
    <property type="status" value="JOINED"/>
    <property type="molecule type" value="Genomic_DNA"/>
</dbReference>
<dbReference type="EMBL" id="U31190">
    <property type="protein sequence ID" value="AAC50456.1"/>
    <property type="status" value="JOINED"/>
    <property type="molecule type" value="Genomic_DNA"/>
</dbReference>
<dbReference type="EMBL" id="U31191">
    <property type="protein sequence ID" value="AAC50456.1"/>
    <property type="status" value="JOINED"/>
    <property type="molecule type" value="Genomic_DNA"/>
</dbReference>
<dbReference type="EMBL" id="U31192">
    <property type="protein sequence ID" value="AAC50456.1"/>
    <property type="status" value="JOINED"/>
    <property type="molecule type" value="Genomic_DNA"/>
</dbReference>
<dbReference type="EMBL" id="U31193">
    <property type="protein sequence ID" value="AAC50456.1"/>
    <property type="status" value="JOINED"/>
    <property type="molecule type" value="Genomic_DNA"/>
</dbReference>
<dbReference type="EMBL" id="U31194">
    <property type="protein sequence ID" value="AAC50456.1"/>
    <property type="status" value="JOINED"/>
    <property type="molecule type" value="Genomic_DNA"/>
</dbReference>
<dbReference type="EMBL" id="U31195">
    <property type="protein sequence ID" value="AAC50456.1"/>
    <property type="status" value="JOINED"/>
    <property type="molecule type" value="Genomic_DNA"/>
</dbReference>
<dbReference type="EMBL" id="U31196">
    <property type="protein sequence ID" value="AAC50456.1"/>
    <property type="status" value="JOINED"/>
    <property type="molecule type" value="Genomic_DNA"/>
</dbReference>
<dbReference type="EMBL" id="U31197">
    <property type="protein sequence ID" value="AAC50456.1"/>
    <property type="status" value="JOINED"/>
    <property type="molecule type" value="Genomic_DNA"/>
</dbReference>
<dbReference type="EMBL" id="U31198">
    <property type="protein sequence ID" value="AAC50456.1"/>
    <property type="status" value="JOINED"/>
    <property type="molecule type" value="Genomic_DNA"/>
</dbReference>
<dbReference type="EMBL" id="AL354953">
    <property type="status" value="NOT_ANNOTATED_CDS"/>
    <property type="molecule type" value="Genomic_DNA"/>
</dbReference>
<dbReference type="EMBL" id="CH471067">
    <property type="protein sequence ID" value="EAW91146.1"/>
    <property type="molecule type" value="Genomic_DNA"/>
</dbReference>
<dbReference type="EMBL" id="BC112286">
    <property type="protein sequence ID" value="AAI12287.1"/>
    <property type="molecule type" value="mRNA"/>
</dbReference>
<dbReference type="EMBL" id="BC113378">
    <property type="protein sequence ID" value="AAI13379.1"/>
    <property type="molecule type" value="mRNA"/>
</dbReference>
<dbReference type="CCDS" id="CCDS1352.1">
    <molecule id="Q13753-1"/>
</dbReference>
<dbReference type="CCDS" id="CCDS44285.1">
    <molecule id="Q13753-2"/>
</dbReference>
<dbReference type="PIR" id="A44018">
    <property type="entry name" value="A44018"/>
</dbReference>
<dbReference type="RefSeq" id="NP_005553.2">
    <molecule id="Q13753-1"/>
    <property type="nucleotide sequence ID" value="NM_005562.3"/>
</dbReference>
<dbReference type="RefSeq" id="NP_061486.2">
    <molecule id="Q13753-2"/>
    <property type="nucleotide sequence ID" value="NM_018891.3"/>
</dbReference>
<dbReference type="RefSeq" id="XP_054192524.1">
    <molecule id="Q13753-1"/>
    <property type="nucleotide sequence ID" value="XM_054336549.1"/>
</dbReference>
<dbReference type="RefSeq" id="XP_054192525.1">
    <molecule id="Q13753-1"/>
    <property type="nucleotide sequence ID" value="XM_054336550.1"/>
</dbReference>
<dbReference type="SMR" id="Q13753"/>
<dbReference type="BioGRID" id="110112">
    <property type="interactions" value="36"/>
</dbReference>
<dbReference type="ComplexPortal" id="CPX-1774">
    <property type="entry name" value="Laminin-332 complex variant A"/>
</dbReference>
<dbReference type="ComplexPortal" id="CPX-1783">
    <property type="entry name" value="Laminin-522 complex"/>
</dbReference>
<dbReference type="ComplexPortal" id="CPX-3165">
    <property type="entry name" value="Laminin-332 complex variant B"/>
</dbReference>
<dbReference type="FunCoup" id="Q13753">
    <property type="interactions" value="699"/>
</dbReference>
<dbReference type="IntAct" id="Q13753">
    <property type="interactions" value="12"/>
</dbReference>
<dbReference type="MINT" id="Q13753"/>
<dbReference type="STRING" id="9606.ENSP00000264144"/>
<dbReference type="ChEMBL" id="CHEMBL2364187"/>
<dbReference type="Allergome" id="8331">
    <property type="allergen name" value="Hom s Laminin gamma_2"/>
</dbReference>
<dbReference type="GlyConnect" id="1445">
    <property type="glycosylation" value="2 N-Linked glycans (2 sites)"/>
</dbReference>
<dbReference type="GlyCosmos" id="Q13753">
    <property type="glycosylation" value="4 sites, 2 glycans"/>
</dbReference>
<dbReference type="GlyGen" id="Q13753">
    <property type="glycosylation" value="12 sites, 6 N-linked glycans (2 sites), 1 O-linked glycan (6 sites)"/>
</dbReference>
<dbReference type="iPTMnet" id="Q13753"/>
<dbReference type="MetOSite" id="Q13753"/>
<dbReference type="PhosphoSitePlus" id="Q13753"/>
<dbReference type="SwissPalm" id="Q13753"/>
<dbReference type="BioMuta" id="LAMC2"/>
<dbReference type="DMDM" id="90185107"/>
<dbReference type="jPOST" id="Q13753"/>
<dbReference type="MassIVE" id="Q13753"/>
<dbReference type="PaxDb" id="9606-ENSP00000264144"/>
<dbReference type="PeptideAtlas" id="Q13753"/>
<dbReference type="ProteomicsDB" id="59675">
    <molecule id="Q13753-1"/>
</dbReference>
<dbReference type="ProteomicsDB" id="59676">
    <molecule id="Q13753-2"/>
</dbReference>
<dbReference type="Pumba" id="Q13753"/>
<dbReference type="Antibodypedia" id="3791">
    <property type="antibodies" value="289 antibodies from 32 providers"/>
</dbReference>
<dbReference type="DNASU" id="3918"/>
<dbReference type="Ensembl" id="ENST00000264144.5">
    <molecule id="Q13753-1"/>
    <property type="protein sequence ID" value="ENSP00000264144.4"/>
    <property type="gene ID" value="ENSG00000058085.15"/>
</dbReference>
<dbReference type="Ensembl" id="ENST00000493293.5">
    <molecule id="Q13753-2"/>
    <property type="protein sequence ID" value="ENSP00000432063.1"/>
    <property type="gene ID" value="ENSG00000058085.15"/>
</dbReference>
<dbReference type="GeneID" id="3918"/>
<dbReference type="KEGG" id="hsa:3918"/>
<dbReference type="MANE-Select" id="ENST00000264144.5">
    <property type="protein sequence ID" value="ENSP00000264144.4"/>
    <property type="RefSeq nucleotide sequence ID" value="NM_005562.3"/>
    <property type="RefSeq protein sequence ID" value="NP_005553.2"/>
</dbReference>
<dbReference type="UCSC" id="uc001gpz.5">
    <molecule id="Q13753-1"/>
    <property type="organism name" value="human"/>
</dbReference>
<dbReference type="AGR" id="HGNC:6493"/>
<dbReference type="CTD" id="3918"/>
<dbReference type="DisGeNET" id="3918"/>
<dbReference type="GeneCards" id="LAMC2"/>
<dbReference type="GeneReviews" id="LAMC2"/>
<dbReference type="HGNC" id="HGNC:6493">
    <property type="gene designation" value="LAMC2"/>
</dbReference>
<dbReference type="HPA" id="ENSG00000058085">
    <property type="expression patterns" value="Tissue enhanced (urinary)"/>
</dbReference>
<dbReference type="MalaCards" id="LAMC2"/>
<dbReference type="MIM" id="150292">
    <property type="type" value="gene"/>
</dbReference>
<dbReference type="MIM" id="619785">
    <property type="type" value="phenotype"/>
</dbReference>
<dbReference type="MIM" id="619786">
    <property type="type" value="phenotype"/>
</dbReference>
<dbReference type="neXtProt" id="NX_Q13753"/>
<dbReference type="OpenTargets" id="ENSG00000058085"/>
<dbReference type="Orphanet" id="79402">
    <property type="disease" value="Intermediate generalized junctional epidermolysis bullosa"/>
</dbReference>
<dbReference type="Orphanet" id="79404">
    <property type="disease" value="Severe generalized junctional epidermolysis bullosa"/>
</dbReference>
<dbReference type="PharmGKB" id="PA30281"/>
<dbReference type="VEuPathDB" id="HostDB:ENSG00000058085"/>
<dbReference type="eggNOG" id="KOG1836">
    <property type="taxonomic scope" value="Eukaryota"/>
</dbReference>
<dbReference type="GeneTree" id="ENSGT00940000160470"/>
<dbReference type="HOGENOM" id="CLU_002471_0_0_1"/>
<dbReference type="InParanoid" id="Q13753"/>
<dbReference type="OMA" id="ARWVQTC"/>
<dbReference type="OrthoDB" id="430826at2759"/>
<dbReference type="PAN-GO" id="Q13753">
    <property type="GO annotations" value="6 GO annotations based on evolutionary models"/>
</dbReference>
<dbReference type="PhylomeDB" id="Q13753"/>
<dbReference type="PathwayCommons" id="Q13753"/>
<dbReference type="Reactome" id="R-HSA-1474228">
    <property type="pathway name" value="Degradation of the extracellular matrix"/>
</dbReference>
<dbReference type="Reactome" id="R-HSA-2022090">
    <property type="pathway name" value="Assembly of collagen fibrils and other multimeric structures"/>
</dbReference>
<dbReference type="Reactome" id="R-HSA-2214320">
    <property type="pathway name" value="Anchoring fibril formation"/>
</dbReference>
<dbReference type="Reactome" id="R-HSA-3000157">
    <property type="pathway name" value="Laminin interactions"/>
</dbReference>
<dbReference type="Reactome" id="R-HSA-3000171">
    <property type="pathway name" value="Non-integrin membrane-ECM interactions"/>
</dbReference>
<dbReference type="Reactome" id="R-HSA-446107">
    <property type="pathway name" value="Type I hemidesmosome assembly"/>
</dbReference>
<dbReference type="Reactome" id="R-HSA-8874081">
    <property type="pathway name" value="MET activates PTK2 signaling"/>
</dbReference>
<dbReference type="Reactome" id="R-HSA-9913351">
    <property type="pathway name" value="Formation of the dystrophin-glycoprotein complex (DGC)"/>
</dbReference>
<dbReference type="SignaLink" id="Q13753"/>
<dbReference type="SIGNOR" id="Q13753"/>
<dbReference type="BioGRID-ORCS" id="3918">
    <property type="hits" value="11 hits in 1146 CRISPR screens"/>
</dbReference>
<dbReference type="ChiTaRS" id="LAMC2">
    <property type="organism name" value="human"/>
</dbReference>
<dbReference type="GeneWiki" id="Laminin,_gamma_2"/>
<dbReference type="GenomeRNAi" id="3918"/>
<dbReference type="Pharos" id="Q13753">
    <property type="development level" value="Tbio"/>
</dbReference>
<dbReference type="PRO" id="PR:Q13753"/>
<dbReference type="Proteomes" id="UP000005640">
    <property type="component" value="Chromosome 1"/>
</dbReference>
<dbReference type="RNAct" id="Q13753">
    <property type="molecule type" value="protein"/>
</dbReference>
<dbReference type="Bgee" id="ENSG00000058085">
    <property type="expression patterns" value="Expressed in islet of Langerhans and 143 other cell types or tissues"/>
</dbReference>
<dbReference type="GO" id="GO:0005938">
    <property type="term" value="C:cell cortex"/>
    <property type="evidence" value="ECO:0007669"/>
    <property type="project" value="Ensembl"/>
</dbReference>
<dbReference type="GO" id="GO:0062023">
    <property type="term" value="C:collagen-containing extracellular matrix"/>
    <property type="evidence" value="ECO:0007005"/>
    <property type="project" value="BHF-UCL"/>
</dbReference>
<dbReference type="GO" id="GO:0005576">
    <property type="term" value="C:extracellular region"/>
    <property type="evidence" value="ECO:0000304"/>
    <property type="project" value="Reactome"/>
</dbReference>
<dbReference type="GO" id="GO:0005615">
    <property type="term" value="C:extracellular space"/>
    <property type="evidence" value="ECO:0007669"/>
    <property type="project" value="Ensembl"/>
</dbReference>
<dbReference type="GO" id="GO:0005607">
    <property type="term" value="C:laminin-2 complex"/>
    <property type="evidence" value="ECO:0007669"/>
    <property type="project" value="Ensembl"/>
</dbReference>
<dbReference type="GO" id="GO:0048471">
    <property type="term" value="C:perinuclear region of cytoplasm"/>
    <property type="evidence" value="ECO:0007669"/>
    <property type="project" value="Ensembl"/>
</dbReference>
<dbReference type="GO" id="GO:0008201">
    <property type="term" value="F:heparin binding"/>
    <property type="evidence" value="ECO:0007669"/>
    <property type="project" value="UniProtKB-KW"/>
</dbReference>
<dbReference type="GO" id="GO:0007155">
    <property type="term" value="P:cell adhesion"/>
    <property type="evidence" value="ECO:0007669"/>
    <property type="project" value="UniProtKB-KW"/>
</dbReference>
<dbReference type="GO" id="GO:0008544">
    <property type="term" value="P:epidermis development"/>
    <property type="evidence" value="ECO:0000304"/>
    <property type="project" value="ProtInc"/>
</dbReference>
<dbReference type="GO" id="GO:0030335">
    <property type="term" value="P:positive regulation of cell migration"/>
    <property type="evidence" value="ECO:0000315"/>
    <property type="project" value="BHF-UCL"/>
</dbReference>
<dbReference type="GO" id="GO:0008284">
    <property type="term" value="P:positive regulation of cell population proliferation"/>
    <property type="evidence" value="ECO:0000315"/>
    <property type="project" value="BHF-UCL"/>
</dbReference>
<dbReference type="CDD" id="cd00055">
    <property type="entry name" value="EGF_Lam"/>
    <property type="match status" value="6"/>
</dbReference>
<dbReference type="FunFam" id="2.10.25.10:FF:000067">
    <property type="entry name" value="Laminin subunit gamma 1"/>
    <property type="match status" value="1"/>
</dbReference>
<dbReference type="FunFam" id="2.10.25.10:FF:000399">
    <property type="entry name" value="Laminin subunit gamma 2"/>
    <property type="match status" value="1"/>
</dbReference>
<dbReference type="FunFam" id="2.10.25.10:FF:000441">
    <property type="entry name" value="Laminin subunit gamma 2"/>
    <property type="match status" value="1"/>
</dbReference>
<dbReference type="FunFam" id="2.10.25.10:FF:000533">
    <property type="entry name" value="Laminin subunit gamma 2"/>
    <property type="match status" value="1"/>
</dbReference>
<dbReference type="FunFam" id="2.10.25.10:FF:000174">
    <property type="entry name" value="Laminin subunit gamma-1"/>
    <property type="match status" value="1"/>
</dbReference>
<dbReference type="Gene3D" id="2.10.25.10">
    <property type="entry name" value="Laminin"/>
    <property type="match status" value="5"/>
</dbReference>
<dbReference type="InterPro" id="IPR000742">
    <property type="entry name" value="EGF-like_dom"/>
</dbReference>
<dbReference type="InterPro" id="IPR050440">
    <property type="entry name" value="Laminin/Netrin_ECM"/>
</dbReference>
<dbReference type="InterPro" id="IPR000034">
    <property type="entry name" value="Laminin_IV"/>
</dbReference>
<dbReference type="InterPro" id="IPR002049">
    <property type="entry name" value="LE_dom"/>
</dbReference>
<dbReference type="PANTHER" id="PTHR10574:SF313">
    <property type="entry name" value="LAMININ SUBUNIT GAMMA-2"/>
    <property type="match status" value="1"/>
</dbReference>
<dbReference type="PANTHER" id="PTHR10574">
    <property type="entry name" value="NETRIN/LAMININ-RELATED"/>
    <property type="match status" value="1"/>
</dbReference>
<dbReference type="Pfam" id="PF00053">
    <property type="entry name" value="EGF_laminin"/>
    <property type="match status" value="7"/>
</dbReference>
<dbReference type="Pfam" id="PF00052">
    <property type="entry name" value="Laminin_B"/>
    <property type="match status" value="1"/>
</dbReference>
<dbReference type="PRINTS" id="PR00011">
    <property type="entry name" value="EGFLAMININ"/>
</dbReference>
<dbReference type="SMART" id="SM00181">
    <property type="entry name" value="EGF"/>
    <property type="match status" value="6"/>
</dbReference>
<dbReference type="SMART" id="SM00180">
    <property type="entry name" value="EGF_Lam"/>
    <property type="match status" value="7"/>
</dbReference>
<dbReference type="SMART" id="SM00281">
    <property type="entry name" value="LamB"/>
    <property type="match status" value="1"/>
</dbReference>
<dbReference type="SUPFAM" id="SSF57196">
    <property type="entry name" value="EGF/Laminin"/>
    <property type="match status" value="5"/>
</dbReference>
<dbReference type="PROSITE" id="PS00022">
    <property type="entry name" value="EGF_1"/>
    <property type="match status" value="4"/>
</dbReference>
<dbReference type="PROSITE" id="PS01186">
    <property type="entry name" value="EGF_2"/>
    <property type="match status" value="2"/>
</dbReference>
<dbReference type="PROSITE" id="PS01248">
    <property type="entry name" value="EGF_LAM_1"/>
    <property type="match status" value="6"/>
</dbReference>
<dbReference type="PROSITE" id="PS50027">
    <property type="entry name" value="EGF_LAM_2"/>
    <property type="match status" value="6"/>
</dbReference>
<dbReference type="PROSITE" id="PS51115">
    <property type="entry name" value="LAMININ_IVA"/>
    <property type="match status" value="1"/>
</dbReference>
<proteinExistence type="evidence at protein level"/>
<comment type="function">
    <text evidence="8">Binding to cells via a high affinity receptor, laminin is thought to mediate the attachment, migration and organization of cells into tissues during embryonic development by interacting with other extracellular matrix components. Ladsin exerts cell-scattering activity toward a wide variety of cells, including epithelial, endothelial, and fibroblastic cells.</text>
</comment>
<comment type="subunit">
    <text>Laminin is a complex glycoprotein, consisting of three different polypeptide chains (alpha, beta, gamma), which are bound to each other by disulfide bonds into a cross-shaped molecule comprising one long and three short arms with globules at each end. Gamma-2 is a subunit of laminin-5 (laminin-332 or epiligrin/kalinin/nicein).</text>
</comment>
<comment type="subcellular location">
    <subcellularLocation>
        <location>Secreted</location>
        <location>Extracellular space</location>
        <location>Extracellular matrix</location>
        <location>Basement membrane</location>
    </subcellularLocation>
    <text>Major component.</text>
</comment>
<comment type="alternative products">
    <event type="alternative splicing"/>
    <isoform>
        <id>Q13753-1</id>
        <name>Long</name>
        <sequence type="displayed"/>
    </isoform>
    <isoform>
        <id>Q13753-2</id>
        <name>Short</name>
        <sequence type="described" ref="VSP_003040"/>
    </isoform>
</comment>
<comment type="tissue specificity">
    <text>The large variant is expressed only in specific epithelial cells of embryonic and neonatal tissues. In 17-week old embryo the small variant is found in cerebral cortex, lung, and distal tubes of kidney, but not in epithelia except for distal tubuli.</text>
</comment>
<comment type="domain">
    <text>The alpha-helical domains I and II are thought to interact with other laminin chains to form a coiled coil structure.</text>
</comment>
<comment type="domain">
    <text>Domain IV is globular.</text>
</comment>
<comment type="PTM">
    <text evidence="6">O-glycosylated; contains chondroitin sulfate (CS). CS attachment is on either Ser-803 or Ser-805.</text>
</comment>
<comment type="disease" evidence="5">
    <disease id="DI-06340">
        <name>Epidermolysis bullosa, junctional 3A, intermediate</name>
        <acronym>JEB3A</acronym>
        <description>A form of epidermolysis bullosa, a genodermatosis characterized by recurrent blistering, fragility of the skin and mucosal epithelia, and erosions caused by minor mechanical trauma. JEB3A is an autosomal recessive, intermediate form in which blistering lesions occur between the epidermis and the dermis at the lamina lucida level of the basement membrane zone. In intermediate forms of junctional epidermolysis bullosa, blistering does not lead to the formation of chronic granulation tissue and does not affect the lifespan of affected individuals. Nail dystrophy and dental enamel defects are present. Scarring or non-scarring alopecia and diffuse hair loss may occur.</description>
        <dbReference type="MIM" id="619785"/>
    </disease>
    <text>The disease is caused by variants affecting the gene represented in this entry.</text>
</comment>
<comment type="disease" evidence="5 7">
    <disease id="DI-06339">
        <name>Epidermolysis bullosa, junctional 3B, severe</name>
        <acronym>JEB3B</acronym>
        <description>A form of epidermolysis bullosa, a genodermatosis characterized by recurrent blistering, fragility of the skin and mucosal epithelia, and erosions caused by minor mechanical trauma. JEB3B is an autosomal recessive form in which blistering lesions occur between the epidermis and the dermis at the lamina lucida level of the basement membrane zone. It belongs to the severe spectrum of junctional epidermolysis bullosa (previously known as generalized severe or Herlitz type), characterized by onset of blistering over large regions of the body at birth or in early infancy. Blistering also affects the mucous membranes, such as the moist lining of the mouth and digestive tract, which can make it difficult to eat and digest food. The extensive blistering leads to scarring and the formation of red, bumpy patches called granulation tissue. Other complications can include fusion of the fingers and toes, abnormalities of the fingernails and toenails, joint deformities, dental enamel defects, and alopecia. Severe, junctional forms are associated with death in the first 6 to 24 months of life.</description>
        <dbReference type="MIM" id="619786"/>
    </disease>
    <text>The disease is caused by variants affecting the gene represented in this entry.</text>
</comment>
<comment type="miscellaneous">
    <text evidence="1">Binds heparin.</text>
</comment>
<keyword id="KW-0025">Alternative splicing</keyword>
<keyword id="KW-0084">Basement membrane</keyword>
<keyword id="KW-0130">Cell adhesion</keyword>
<keyword id="KW-0175">Coiled coil</keyword>
<keyword id="KW-0903">Direct protein sequencing</keyword>
<keyword id="KW-1015">Disulfide bond</keyword>
<keyword id="KW-0263">Epidermolysis bullosa</keyword>
<keyword id="KW-0272">Extracellular matrix</keyword>
<keyword id="KW-0325">Glycoprotein</keyword>
<keyword id="KW-0358">Heparin-binding</keyword>
<keyword id="KW-0424">Laminin EGF-like domain</keyword>
<keyword id="KW-0654">Proteoglycan</keyword>
<keyword id="KW-1267">Proteomics identification</keyword>
<keyword id="KW-1185">Reference proteome</keyword>
<keyword id="KW-0677">Repeat</keyword>
<keyword id="KW-0964">Secreted</keyword>
<keyword id="KW-0732">Signal</keyword>
<reference key="1">
    <citation type="journal article" date="1992" name="J. Cell Biol.">
        <title>A truncated laminin chain homologous to the B2 chain: structure, spatial expression, and chromosomal assignment.</title>
        <authorList>
            <person name="Kallunki P."/>
            <person name="Sainio K."/>
            <person name="Eddy R."/>
            <person name="Byers M."/>
            <person name="Kallunki T."/>
            <person name="Sariola H."/>
            <person name="Beck K."/>
            <person name="Hirvonen H."/>
            <person name="Shows T.B."/>
            <person name="Tryggvason K."/>
        </authorList>
    </citation>
    <scope>NUCLEOTIDE SEQUENCE [MRNA]</scope>
    <scope>ALTERNATIVE SPLICING</scope>
    <source>
        <tissue>Fibrosarcoma</tissue>
    </source>
</reference>
<reference key="2">
    <citation type="journal article" date="1994" name="Eur. J. Biochem.">
        <title>The 100-kDa chain of nicein/kalinin is a laminin B2 chain variant.</title>
        <authorList>
            <person name="Vailly J."/>
            <person name="Verrando P."/>
            <person name="Champliaud M.-F."/>
            <person name="Gerecke D."/>
            <person name="Wagman D.W."/>
            <person name="Baudoin C."/>
            <person name="Aberdam D."/>
            <person name="Burgeson R."/>
            <person name="Bauer E."/>
            <person name="Ortonne J.-P."/>
        </authorList>
    </citation>
    <scope>NUCLEOTIDE SEQUENCE [MRNA]</scope>
    <scope>PROTEIN SEQUENCE OF 1090-1114</scope>
    <source>
        <tissue>Epidermis</tissue>
        <tissue>Keratinocyte</tissue>
    </source>
</reference>
<reference key="3">
    <citation type="journal article" date="1996" name="Genomics">
        <title>Structure of the human laminin gamma 2 chain gene (LAMC2): alternative splicing with different tissue distribution of two transcripts.</title>
        <authorList>
            <person name="Airenne T."/>
            <person name="Haakana H."/>
            <person name="Sainio K."/>
            <person name="Kallunki T."/>
            <person name="Kallunki P."/>
            <person name="Sariola H."/>
            <person name="Tryggvason K."/>
        </authorList>
    </citation>
    <scope>NUCLEOTIDE SEQUENCE [GENOMIC DNA]</scope>
    <scope>ALTERNATIVE SPLICING</scope>
    <source>
        <tissue>Placenta</tissue>
    </source>
</reference>
<reference key="4">
    <citation type="journal article" date="2006" name="Nature">
        <title>The DNA sequence and biological annotation of human chromosome 1.</title>
        <authorList>
            <person name="Gregory S.G."/>
            <person name="Barlow K.F."/>
            <person name="McLay K.E."/>
            <person name="Kaul R."/>
            <person name="Swarbreck D."/>
            <person name="Dunham A."/>
            <person name="Scott C.E."/>
            <person name="Howe K.L."/>
            <person name="Woodfine K."/>
            <person name="Spencer C.C.A."/>
            <person name="Jones M.C."/>
            <person name="Gillson C."/>
            <person name="Searle S."/>
            <person name="Zhou Y."/>
            <person name="Kokocinski F."/>
            <person name="McDonald L."/>
            <person name="Evans R."/>
            <person name="Phillips K."/>
            <person name="Atkinson A."/>
            <person name="Cooper R."/>
            <person name="Jones C."/>
            <person name="Hall R.E."/>
            <person name="Andrews T.D."/>
            <person name="Lloyd C."/>
            <person name="Ainscough R."/>
            <person name="Almeida J.P."/>
            <person name="Ambrose K.D."/>
            <person name="Anderson F."/>
            <person name="Andrew R.W."/>
            <person name="Ashwell R.I.S."/>
            <person name="Aubin K."/>
            <person name="Babbage A.K."/>
            <person name="Bagguley C.L."/>
            <person name="Bailey J."/>
            <person name="Beasley H."/>
            <person name="Bethel G."/>
            <person name="Bird C.P."/>
            <person name="Bray-Allen S."/>
            <person name="Brown J.Y."/>
            <person name="Brown A.J."/>
            <person name="Buckley D."/>
            <person name="Burton J."/>
            <person name="Bye J."/>
            <person name="Carder C."/>
            <person name="Chapman J.C."/>
            <person name="Clark S.Y."/>
            <person name="Clarke G."/>
            <person name="Clee C."/>
            <person name="Cobley V."/>
            <person name="Collier R.E."/>
            <person name="Corby N."/>
            <person name="Coville G.J."/>
            <person name="Davies J."/>
            <person name="Deadman R."/>
            <person name="Dunn M."/>
            <person name="Earthrowl M."/>
            <person name="Ellington A.G."/>
            <person name="Errington H."/>
            <person name="Frankish A."/>
            <person name="Frankland J."/>
            <person name="French L."/>
            <person name="Garner P."/>
            <person name="Garnett J."/>
            <person name="Gay L."/>
            <person name="Ghori M.R.J."/>
            <person name="Gibson R."/>
            <person name="Gilby L.M."/>
            <person name="Gillett W."/>
            <person name="Glithero R.J."/>
            <person name="Grafham D.V."/>
            <person name="Griffiths C."/>
            <person name="Griffiths-Jones S."/>
            <person name="Grocock R."/>
            <person name="Hammond S."/>
            <person name="Harrison E.S.I."/>
            <person name="Hart E."/>
            <person name="Haugen E."/>
            <person name="Heath P.D."/>
            <person name="Holmes S."/>
            <person name="Holt K."/>
            <person name="Howden P.J."/>
            <person name="Hunt A.R."/>
            <person name="Hunt S.E."/>
            <person name="Hunter G."/>
            <person name="Isherwood J."/>
            <person name="James R."/>
            <person name="Johnson C."/>
            <person name="Johnson D."/>
            <person name="Joy A."/>
            <person name="Kay M."/>
            <person name="Kershaw J.K."/>
            <person name="Kibukawa M."/>
            <person name="Kimberley A.M."/>
            <person name="King A."/>
            <person name="Knights A.J."/>
            <person name="Lad H."/>
            <person name="Laird G."/>
            <person name="Lawlor S."/>
            <person name="Leongamornlert D.A."/>
            <person name="Lloyd D.M."/>
            <person name="Loveland J."/>
            <person name="Lovell J."/>
            <person name="Lush M.J."/>
            <person name="Lyne R."/>
            <person name="Martin S."/>
            <person name="Mashreghi-Mohammadi M."/>
            <person name="Matthews L."/>
            <person name="Matthews N.S.W."/>
            <person name="McLaren S."/>
            <person name="Milne S."/>
            <person name="Mistry S."/>
            <person name="Moore M.J.F."/>
            <person name="Nickerson T."/>
            <person name="O'Dell C.N."/>
            <person name="Oliver K."/>
            <person name="Palmeiri A."/>
            <person name="Palmer S.A."/>
            <person name="Parker A."/>
            <person name="Patel D."/>
            <person name="Pearce A.V."/>
            <person name="Peck A.I."/>
            <person name="Pelan S."/>
            <person name="Phelps K."/>
            <person name="Phillimore B.J."/>
            <person name="Plumb R."/>
            <person name="Rajan J."/>
            <person name="Raymond C."/>
            <person name="Rouse G."/>
            <person name="Saenphimmachak C."/>
            <person name="Sehra H.K."/>
            <person name="Sheridan E."/>
            <person name="Shownkeen R."/>
            <person name="Sims S."/>
            <person name="Skuce C.D."/>
            <person name="Smith M."/>
            <person name="Steward C."/>
            <person name="Subramanian S."/>
            <person name="Sycamore N."/>
            <person name="Tracey A."/>
            <person name="Tromans A."/>
            <person name="Van Helmond Z."/>
            <person name="Wall M."/>
            <person name="Wallis J.M."/>
            <person name="White S."/>
            <person name="Whitehead S.L."/>
            <person name="Wilkinson J.E."/>
            <person name="Willey D.L."/>
            <person name="Williams H."/>
            <person name="Wilming L."/>
            <person name="Wray P.W."/>
            <person name="Wu Z."/>
            <person name="Coulson A."/>
            <person name="Vaudin M."/>
            <person name="Sulston J.E."/>
            <person name="Durbin R.M."/>
            <person name="Hubbard T."/>
            <person name="Wooster R."/>
            <person name="Dunham I."/>
            <person name="Carter N.P."/>
            <person name="McVean G."/>
            <person name="Ross M.T."/>
            <person name="Harrow J."/>
            <person name="Olson M.V."/>
            <person name="Beck S."/>
            <person name="Rogers J."/>
            <person name="Bentley D.R."/>
        </authorList>
    </citation>
    <scope>NUCLEOTIDE SEQUENCE [LARGE SCALE GENOMIC DNA]</scope>
</reference>
<reference key="5">
    <citation type="submission" date="2005-07" db="EMBL/GenBank/DDBJ databases">
        <authorList>
            <person name="Mural R.J."/>
            <person name="Istrail S."/>
            <person name="Sutton G.G."/>
            <person name="Florea L."/>
            <person name="Halpern A.L."/>
            <person name="Mobarry C.M."/>
            <person name="Lippert R."/>
            <person name="Walenz B."/>
            <person name="Shatkay H."/>
            <person name="Dew I."/>
            <person name="Miller J.R."/>
            <person name="Flanigan M.J."/>
            <person name="Edwards N.J."/>
            <person name="Bolanos R."/>
            <person name="Fasulo D."/>
            <person name="Halldorsson B.V."/>
            <person name="Hannenhalli S."/>
            <person name="Turner R."/>
            <person name="Yooseph S."/>
            <person name="Lu F."/>
            <person name="Nusskern D.R."/>
            <person name="Shue B.C."/>
            <person name="Zheng X.H."/>
            <person name="Zhong F."/>
            <person name="Delcher A.L."/>
            <person name="Huson D.H."/>
            <person name="Kravitz S.A."/>
            <person name="Mouchard L."/>
            <person name="Reinert K."/>
            <person name="Remington K.A."/>
            <person name="Clark A.G."/>
            <person name="Waterman M.S."/>
            <person name="Eichler E.E."/>
            <person name="Adams M.D."/>
            <person name="Hunkapiller M.W."/>
            <person name="Myers E.W."/>
            <person name="Venter J.C."/>
        </authorList>
    </citation>
    <scope>NUCLEOTIDE SEQUENCE [LARGE SCALE GENOMIC DNA]</scope>
</reference>
<reference key="6">
    <citation type="journal article" date="2004" name="Genome Res.">
        <title>The status, quality, and expansion of the NIH full-length cDNA project: the Mammalian Gene Collection (MGC).</title>
        <authorList>
            <consortium name="The MGC Project Team"/>
        </authorList>
    </citation>
    <scope>NUCLEOTIDE SEQUENCE [LARGE SCALE MRNA] (ISOFORM SHORT)</scope>
    <source>
        <tissue>Cerebellum</tissue>
    </source>
</reference>
<reference key="7">
    <citation type="journal article" date="1993" name="Proc. Natl. Acad. Sci. U.S.A.">
        <title>A large cell-adhesive scatter factor secreted by human gastric carcinoma cells.</title>
        <authorList>
            <person name="Miyazaki K."/>
            <person name="Kikkawa Y."/>
            <person name="Nakamura A."/>
            <person name="Yasumitsu H."/>
            <person name="Umeda M."/>
        </authorList>
    </citation>
    <scope>NUCLEOTIDE SEQUENCE OF 435-449</scope>
    <scope>FUNCTION</scope>
    <scope>HEPARIN-BINDING</scope>
</reference>
<reference key="8">
    <citation type="journal article" date="1994" name="Nat. Genet.">
        <title>Mutations in the gamma 2 chain gene (LAMC2) of kalinin/laminin 5 in the junctional forms of epidermolysis bullosa.</title>
        <authorList>
            <person name="Pulkkinen L."/>
            <person name="Christiano A.M."/>
            <person name="Airenne T."/>
            <person name="Haakana H."/>
            <person name="Tryggvason K."/>
            <person name="Uitto J."/>
        </authorList>
    </citation>
    <scope>INVOLVEMENT IN JEB3B</scope>
</reference>
<reference key="9">
    <citation type="journal article" date="2002" name="Hum. Genet.">
        <title>Laminin 5 mutations in junctional epidermolysis bullosa: molecular basis of Herlitz vs. non-Herlitz phenotypes.</title>
        <authorList>
            <person name="Nakano A."/>
            <person name="Chao S.C."/>
            <person name="Pulkkinen L."/>
            <person name="Murrell D."/>
            <person name="Bruckner-Tuderman L."/>
            <person name="Pfendner E."/>
            <person name="Uitto J."/>
        </authorList>
    </citation>
    <scope>INVOLVEMENT IN JEB3A</scope>
    <scope>INVOLVEMENT IN JEB3B</scope>
</reference>
<reference key="10">
    <citation type="journal article" date="2011" name="BMC Syst. Biol.">
        <title>Initial characterization of the human central proteome.</title>
        <authorList>
            <person name="Burkard T.R."/>
            <person name="Planyavsky M."/>
            <person name="Kaupe I."/>
            <person name="Breitwieser F.P."/>
            <person name="Buerckstuemmer T."/>
            <person name="Bennett K.L."/>
            <person name="Superti-Furga G."/>
            <person name="Colinge J."/>
        </authorList>
    </citation>
    <scope>IDENTIFICATION BY MASS SPECTROMETRY [LARGE SCALE ANALYSIS]</scope>
</reference>
<reference key="11">
    <citation type="journal article" date="2020" name="Glycobiology">
        <title>An affinity chromatography and glycoproteomics workflow to profile the chondroitin sulfate proteoglycans that interact with malarial VAR2CSA in the placenta and in cancer.</title>
        <authorList>
            <person name="Toledo A.G."/>
            <person name="Pihl J."/>
            <person name="Spliid C.B."/>
            <person name="Persson A."/>
            <person name="Nilsson J."/>
            <person name="Pereira M.A."/>
            <person name="Gustavsson T."/>
            <person name="Choudhary S."/>
            <person name="Oo H.Z."/>
            <person name="Black P.C."/>
            <person name="Daugaard M."/>
            <person name="Esko J.D."/>
            <person name="Larson G."/>
            <person name="Salanti A."/>
            <person name="Clausen T.M."/>
        </authorList>
    </citation>
    <scope>GLYCOSYLATION</scope>
</reference>
<protein>
    <recommendedName>
        <fullName>Laminin subunit gamma-2</fullName>
    </recommendedName>
    <alternativeName>
        <fullName>Cell-scattering factor 140 kDa subunit</fullName>
        <shortName>CSF 140 kDa subunit</shortName>
    </alternativeName>
    <alternativeName>
        <fullName>Epiligrin subunit gamma</fullName>
    </alternativeName>
    <alternativeName>
        <fullName>Kalinin subunit gamma</fullName>
    </alternativeName>
    <alternativeName>
        <fullName>Kalinin/nicein/epiligrin 100 kDa subunit</fullName>
    </alternativeName>
    <alternativeName>
        <fullName>Ladsin 140 kDa subunit</fullName>
    </alternativeName>
    <alternativeName>
        <fullName>Laminin B2t chain</fullName>
    </alternativeName>
    <alternativeName>
        <fullName>Laminin-5 subunit gamma</fullName>
    </alternativeName>
    <alternativeName>
        <fullName>Large adhesive scatter factor 140 kDa subunit</fullName>
    </alternativeName>
    <alternativeName>
        <fullName>Nicein subunit gamma</fullName>
    </alternativeName>
</protein>
<gene>
    <name type="primary">LAMC2</name>
    <name type="synonym">LAMB2T</name>
    <name type="synonym">LAMNB2</name>
</gene>
<sequence>MPALWLGCCLCFSLLLPAARATSRREVCDCNGKSRQCIFDRELHRQTGNGFRCLNCNDNTDGIHCEKCKNGFYRHRERDRCLPCNCNSKGSLSARCDNSGRCSCKPGVTGARCDRCLPGFHMLTDAGCTQDQRLLDSKCDCDPAGIAGPCDAGRCVCKPAVTGERCDRCRSGYYNLDGGNPEGCTQCFCYGHSASCRSSAEYSVHKITSTFHQDVDGWKAVQRNGSPAKLQWSQRHQDVFSSAQRLDPVYFVAPAKFLGNQQVSYGQSLSFDYRVDRGGRHPSAHDVILEGAGLRITAPLMPLGKTLPCGLTKTYTFRLNEHPSNNWSPQLSYFEYRRLLRNLTALRIRATYGEYSTGYIDNVTLISARPVSGAPAPWVEQCICPVGYKGQFCQDCASGYKRDSARLGPFGTCIPCNCQGGGACDPDTGDCYSGDENPDIECADCPIGFYNDPHDPRSCKPCPCHNGFSCSVMPETEEVVCNNCPPGVTGARCELCADGYFGDPFGEHGPVRPCQPCQCNNNVDPSASGNCDRLTGRCLKCIHNTAGIYCDQCKAGYFGDPLAPNPADKCRACNCNPMGSEPVGCRSDGTCVCKPGFGGPNCEHGAFSCPACYNQVKIQMDQFMQQLQRMEALISKAQGGDGVVPDTELEGRMQQAEQALQDILRDAQISEGASRSLGLQLAKVRSQENSYQSRLDDLKMTVERVRALGSQYQNRVRDTHRLITQMQLSLAESEASLGNTNIPASDHYVGPNGFKSLAQEATRLAESHVESASNMEQLTRETEDYSKQALSLVRKALHEGVGSGSGSPDGAVVQGLVEKLEKTKSLAQQLTREATQAEIEADRSYQHSLRLLDSVSRLQGVSDQSFQVEEAKRIKQKADSLSSLVTRHMDEFKRTQKNLGNWKEEAQQLLQNGKSGREKSDQLLSRANLAKSRAQEALSMGNATFYEVESILKNLREFDLQVDNRKAEAEEAMKRLSYISQKVSDASDKTQQAERALGSAAADAQRAKNGAGEALEISSEIEQEIGSLNLEANVTADGALAMEKGLASLKSEMREVEGELERKELEFDTNMDAVQMVITEAQKVDTRAKNAGVTIQDTLNTLDGLLHLMDQPLSVDEEGLVLLEQKLSRAKTQINSQLRPMMSELEERARQQRGHLHLLETSIDGILADVKNLENIRDNLPPGCYNTQALEQQ</sequence>
<organism>
    <name type="scientific">Homo sapiens</name>
    <name type="common">Human</name>
    <dbReference type="NCBI Taxonomy" id="9606"/>
    <lineage>
        <taxon>Eukaryota</taxon>
        <taxon>Metazoa</taxon>
        <taxon>Chordata</taxon>
        <taxon>Craniata</taxon>
        <taxon>Vertebrata</taxon>
        <taxon>Euteleostomi</taxon>
        <taxon>Mammalia</taxon>
        <taxon>Eutheria</taxon>
        <taxon>Euarchontoglires</taxon>
        <taxon>Primates</taxon>
        <taxon>Haplorrhini</taxon>
        <taxon>Catarrhini</taxon>
        <taxon>Hominidae</taxon>
        <taxon>Homo</taxon>
    </lineage>
</organism>
<name>LAMC2_HUMAN</name>
<feature type="signal peptide" evidence="2">
    <location>
        <begin position="1"/>
        <end position="21"/>
    </location>
</feature>
<feature type="chain" id="PRO_0000017077" description="Laminin subunit gamma-2">
    <location>
        <begin position="22"/>
        <end position="1193"/>
    </location>
</feature>
<feature type="domain" description="Laminin EGF-like 1" evidence="4">
    <location>
        <begin position="28"/>
        <end position="83"/>
    </location>
</feature>
<feature type="domain" description="Laminin EGF-like 2" evidence="4">
    <location>
        <begin position="84"/>
        <end position="130"/>
    </location>
</feature>
<feature type="domain" description="Laminin EGF-like 3" evidence="4">
    <location>
        <begin position="139"/>
        <end position="186"/>
    </location>
</feature>
<feature type="domain" description="Laminin EGF-like 4; first part" evidence="4">
    <location>
        <begin position="187"/>
        <end position="196"/>
    </location>
</feature>
<feature type="domain" description="Laminin IV type A" evidence="3">
    <location>
        <begin position="213"/>
        <end position="381"/>
    </location>
</feature>
<feature type="domain" description="Laminin EGF-like 4; second part" evidence="4">
    <location>
        <begin position="382"/>
        <end position="415"/>
    </location>
</feature>
<feature type="domain" description="Laminin EGF-like 5" evidence="4">
    <location>
        <begin position="416"/>
        <end position="461"/>
    </location>
</feature>
<feature type="domain" description="Laminin EGF-like 6" evidence="4">
    <location>
        <begin position="462"/>
        <end position="516"/>
    </location>
</feature>
<feature type="domain" description="Laminin EGF-like 7" evidence="4">
    <location>
        <begin position="517"/>
        <end position="572"/>
    </location>
</feature>
<feature type="domain" description="Laminin EGF-like 8; truncated" evidence="4">
    <location>
        <begin position="573"/>
        <end position="602"/>
    </location>
</feature>
<feature type="region of interest" description="Domain II and I">
    <location>
        <begin position="603"/>
        <end position="1193"/>
    </location>
</feature>
<feature type="coiled-coil region" evidence="2">
    <location>
        <begin position="611"/>
        <end position="718"/>
    </location>
</feature>
<feature type="coiled-coil region" evidence="2">
    <location>
        <begin position="811"/>
        <end position="1076"/>
    </location>
</feature>
<feature type="coiled-coil region" evidence="2">
    <location>
        <begin position="1117"/>
        <end position="1193"/>
    </location>
</feature>
<feature type="glycosylation site" description="N-linked (GlcNAc...) asparagine" evidence="2">
    <location>
        <position position="342"/>
    </location>
</feature>
<feature type="glycosylation site" description="N-linked (GlcNAc...) asparagine" evidence="2">
    <location>
        <position position="362"/>
    </location>
</feature>
<feature type="glycosylation site" description="O-linked (Xyl...) (chondroitin sulfate) serine" evidence="2">
    <location>
        <position position="803"/>
    </location>
</feature>
<feature type="glycosylation site" description="O-linked (Xyl...) (chondroitin sulfate) serine" evidence="2">
    <location>
        <position position="805"/>
    </location>
</feature>
<feature type="glycosylation site" description="N-linked (GlcNAc...) asparagine" evidence="2">
    <location>
        <position position="942"/>
    </location>
</feature>
<feature type="glycosylation site" description="N-linked (GlcNAc...) asparagine" evidence="2">
    <location>
        <position position="1033"/>
    </location>
</feature>
<feature type="disulfide bond" evidence="4">
    <location>
        <begin position="28"/>
        <end position="37"/>
    </location>
</feature>
<feature type="disulfide bond" evidence="4">
    <location>
        <begin position="30"/>
        <end position="53"/>
    </location>
</feature>
<feature type="disulfide bond" evidence="4">
    <location>
        <begin position="56"/>
        <end position="65"/>
    </location>
</feature>
<feature type="disulfide bond" evidence="4">
    <location>
        <begin position="68"/>
        <end position="81"/>
    </location>
</feature>
<feature type="disulfide bond" evidence="4">
    <location>
        <begin position="84"/>
        <end position="96"/>
    </location>
</feature>
<feature type="disulfide bond" evidence="4">
    <location>
        <begin position="86"/>
        <end position="102"/>
    </location>
</feature>
<feature type="disulfide bond" evidence="4">
    <location>
        <begin position="104"/>
        <end position="113"/>
    </location>
</feature>
<feature type="disulfide bond" evidence="4">
    <location>
        <begin position="116"/>
        <end position="128"/>
    </location>
</feature>
<feature type="disulfide bond" evidence="4">
    <location>
        <begin position="139"/>
        <end position="150"/>
    </location>
</feature>
<feature type="disulfide bond" evidence="4">
    <location>
        <begin position="141"/>
        <end position="155"/>
    </location>
</feature>
<feature type="disulfide bond" evidence="4">
    <location>
        <begin position="157"/>
        <end position="166"/>
    </location>
</feature>
<feature type="disulfide bond" evidence="4">
    <location>
        <begin position="169"/>
        <end position="184"/>
    </location>
</feature>
<feature type="disulfide bond" evidence="4">
    <location>
        <begin position="462"/>
        <end position="470"/>
    </location>
</feature>
<feature type="disulfide bond" evidence="4">
    <location>
        <begin position="464"/>
        <end position="481"/>
    </location>
</feature>
<feature type="disulfide bond" evidence="4">
    <location>
        <begin position="484"/>
        <end position="493"/>
    </location>
</feature>
<feature type="disulfide bond" evidence="4">
    <location>
        <begin position="496"/>
        <end position="514"/>
    </location>
</feature>
<feature type="disulfide bond" evidence="4">
    <location>
        <begin position="517"/>
        <end position="531"/>
    </location>
</feature>
<feature type="disulfide bond" evidence="4">
    <location>
        <begin position="519"/>
        <end position="538"/>
    </location>
</feature>
<feature type="disulfide bond" evidence="4">
    <location>
        <begin position="541"/>
        <end position="550"/>
    </location>
</feature>
<feature type="disulfide bond" evidence="4">
    <location>
        <begin position="553"/>
        <end position="570"/>
    </location>
</feature>
<feature type="disulfide bond" evidence="4">
    <location>
        <begin position="573"/>
        <end position="585"/>
    </location>
</feature>
<feature type="disulfide bond" evidence="4">
    <location>
        <begin position="575"/>
        <end position="591"/>
    </location>
</feature>
<feature type="disulfide bond" evidence="4">
    <location>
        <begin position="593"/>
        <end position="602"/>
    </location>
</feature>
<feature type="disulfide bond" description="Interchain" evidence="10">
    <location>
        <position position="609"/>
    </location>
</feature>
<feature type="disulfide bond" description="Interchain" evidence="10">
    <location>
        <position position="612"/>
    </location>
</feature>
<feature type="disulfide bond" description="Interchain" evidence="10">
    <location>
        <position position="1184"/>
    </location>
</feature>
<feature type="splice variant" id="VSP_003040" description="In isoform Short." evidence="9">
    <original>DQPLSVDEEGLVLLEQKLSRAKTQINSQLRPMMSELEERARQQRGHLHLLETSIDGILADVKNLENIRDNLPPGCYNTQALEQQ</original>
    <variation>GM</variation>
    <location>
        <begin position="1110"/>
        <end position="1193"/>
    </location>
</feature>
<feature type="sequence variant" id="VAR_050081" description="In dbSNP:rs12065473.">
    <original>A</original>
    <variation>P</variation>
    <location>
        <position position="111"/>
    </location>
</feature>
<feature type="sequence variant" id="VAR_050082" description="In dbSNP:rs17481405.">
    <original>R</original>
    <variation>Q</variation>
    <location>
        <position position="115"/>
    </location>
</feature>
<feature type="sequence variant" id="VAR_050083" description="In dbSNP:rs11586699.">
    <original>T</original>
    <variation>M</variation>
    <location>
        <position position="124"/>
    </location>
</feature>
<feature type="sequence variant" id="VAR_050084" description="In dbSNP:rs12037099.">
    <original>D</original>
    <variation>V</variation>
    <location>
        <position position="136"/>
    </location>
</feature>
<feature type="sequence variant" id="VAR_022017" description="In dbSNP:rs2296306.">
    <original>D</original>
    <variation>E</variation>
    <location>
        <position position="247"/>
    </location>
</feature>
<feature type="sequence variant" id="VAR_050085" description="In dbSNP:rs4373715.">
    <original>S</original>
    <variation>I</variation>
    <location>
        <position position="608"/>
    </location>
</feature>
<feature type="sequence variant" id="VAR_020304" description="In dbSNP:rs2296303.">
    <original>S</original>
    <variation>T</variation>
    <location>
        <position position="733"/>
    </location>
</feature>
<feature type="sequence conflict" description="In Ref. 2; CAA52108." evidence="10" ref="2">
    <original>F</original>
    <variation>L</variation>
    <location>
        <position position="12"/>
    </location>
</feature>
<feature type="sequence conflict" description="In Ref. 1; CAA78728/CAA78729." evidence="10" ref="1">
    <original>M</original>
    <variation>I</variation>
    <location>
        <position position="473"/>
    </location>
</feature>
<feature type="sequence conflict" description="In Ref. 1; CAA78728/CAA78729." evidence="10" ref="1">
    <original>N</original>
    <variation>S</variation>
    <location>
        <position position="521"/>
    </location>
</feature>
<feature type="sequence conflict" description="In Ref. 1; CAA78728/CAA78729." evidence="10" ref="1">
    <original>R</original>
    <variation>P</variation>
    <location>
        <position position="857"/>
    </location>
</feature>
<feature type="sequence conflict" description="In Ref. 3; AAC50457/AAC50456." evidence="10" ref="3">
    <original>S</original>
    <variation>T</variation>
    <location>
        <position position="883"/>
    </location>
</feature>
<accession>Q13753</accession>
<accession>Q02536</accession>
<accession>Q02537</accession>
<accession>Q13752</accession>
<accession>Q14941</accession>
<accession>Q14DF7</accession>
<accession>Q2M1N2</accession>
<accession>Q5VYE8</accession>